<evidence type="ECO:0000255" key="1">
    <source>
        <dbReference type="HAMAP-Rule" id="MF_00236"/>
    </source>
</evidence>
<evidence type="ECO:0000256" key="2">
    <source>
        <dbReference type="SAM" id="MobiDB-lite"/>
    </source>
</evidence>
<protein>
    <recommendedName>
        <fullName evidence="1">Sec-independent protein translocase protein TatA</fullName>
    </recommendedName>
</protein>
<name>TATA_RALPJ</name>
<reference key="1">
    <citation type="submission" date="2008-05" db="EMBL/GenBank/DDBJ databases">
        <title>Complete sequence of chromosome 1 of Ralstonia pickettii 12J.</title>
        <authorList>
            <person name="Lucas S."/>
            <person name="Copeland A."/>
            <person name="Lapidus A."/>
            <person name="Glavina del Rio T."/>
            <person name="Dalin E."/>
            <person name="Tice H."/>
            <person name="Bruce D."/>
            <person name="Goodwin L."/>
            <person name="Pitluck S."/>
            <person name="Meincke L."/>
            <person name="Brettin T."/>
            <person name="Detter J.C."/>
            <person name="Han C."/>
            <person name="Kuske C.R."/>
            <person name="Schmutz J."/>
            <person name="Larimer F."/>
            <person name="Land M."/>
            <person name="Hauser L."/>
            <person name="Kyrpides N."/>
            <person name="Mikhailova N."/>
            <person name="Marsh T."/>
            <person name="Richardson P."/>
        </authorList>
    </citation>
    <scope>NUCLEOTIDE SEQUENCE [LARGE SCALE GENOMIC DNA]</scope>
    <source>
        <strain>12J</strain>
    </source>
</reference>
<organism>
    <name type="scientific">Ralstonia pickettii (strain 12J)</name>
    <dbReference type="NCBI Taxonomy" id="402626"/>
    <lineage>
        <taxon>Bacteria</taxon>
        <taxon>Pseudomonadati</taxon>
        <taxon>Pseudomonadota</taxon>
        <taxon>Betaproteobacteria</taxon>
        <taxon>Burkholderiales</taxon>
        <taxon>Burkholderiaceae</taxon>
        <taxon>Ralstonia</taxon>
    </lineage>
</organism>
<comment type="function">
    <text evidence="1">Part of the twin-arginine translocation (Tat) system that transports large folded proteins containing a characteristic twin-arginine motif in their signal peptide across membranes. TatA could form the protein-conducting channel of the Tat system.</text>
</comment>
<comment type="subunit">
    <text evidence="1">The Tat system comprises two distinct complexes: a TatABC complex, containing multiple copies of TatA, TatB and TatC subunits, and a separate TatA complex, containing only TatA subunits. Substrates initially bind to the TatABC complex, which probably triggers association of the separate TatA complex to form the active translocon.</text>
</comment>
<comment type="subcellular location">
    <subcellularLocation>
        <location evidence="1">Cell inner membrane</location>
        <topology evidence="1">Single-pass membrane protein</topology>
    </subcellularLocation>
</comment>
<comment type="similarity">
    <text evidence="1">Belongs to the TatA/E family.</text>
</comment>
<sequence>MGSFSIWHWLIVLVIIMMVFGTKKLRNIGSDLGSAVKGFKDGMREGQEDKPAGSQQPQQTAGQPPRELHDATTIDVEARDKSKQG</sequence>
<keyword id="KW-0997">Cell inner membrane</keyword>
<keyword id="KW-1003">Cell membrane</keyword>
<keyword id="KW-0472">Membrane</keyword>
<keyword id="KW-0653">Protein transport</keyword>
<keyword id="KW-0811">Translocation</keyword>
<keyword id="KW-0812">Transmembrane</keyword>
<keyword id="KW-1133">Transmembrane helix</keyword>
<keyword id="KW-0813">Transport</keyword>
<proteinExistence type="inferred from homology"/>
<feature type="chain" id="PRO_1000197898" description="Sec-independent protein translocase protein TatA">
    <location>
        <begin position="1"/>
        <end position="85"/>
    </location>
</feature>
<feature type="transmembrane region" description="Helical" evidence="1">
    <location>
        <begin position="1"/>
        <end position="21"/>
    </location>
</feature>
<feature type="region of interest" description="Disordered" evidence="2">
    <location>
        <begin position="39"/>
        <end position="85"/>
    </location>
</feature>
<feature type="compositionally biased region" description="Basic and acidic residues" evidence="2">
    <location>
        <begin position="39"/>
        <end position="51"/>
    </location>
</feature>
<feature type="compositionally biased region" description="Polar residues" evidence="2">
    <location>
        <begin position="53"/>
        <end position="62"/>
    </location>
</feature>
<feature type="compositionally biased region" description="Basic and acidic residues" evidence="2">
    <location>
        <begin position="66"/>
        <end position="85"/>
    </location>
</feature>
<dbReference type="EMBL" id="CP001068">
    <property type="protein sequence ID" value="ACD28341.1"/>
    <property type="molecule type" value="Genomic_DNA"/>
</dbReference>
<dbReference type="SMR" id="B2UEE1"/>
<dbReference type="STRING" id="402626.Rpic_3219"/>
<dbReference type="KEGG" id="rpi:Rpic_3219"/>
<dbReference type="eggNOG" id="COG1826">
    <property type="taxonomic scope" value="Bacteria"/>
</dbReference>
<dbReference type="HOGENOM" id="CLU_086034_5_1_4"/>
<dbReference type="GO" id="GO:0033281">
    <property type="term" value="C:TAT protein transport complex"/>
    <property type="evidence" value="ECO:0007669"/>
    <property type="project" value="UniProtKB-UniRule"/>
</dbReference>
<dbReference type="GO" id="GO:0008320">
    <property type="term" value="F:protein transmembrane transporter activity"/>
    <property type="evidence" value="ECO:0007669"/>
    <property type="project" value="UniProtKB-UniRule"/>
</dbReference>
<dbReference type="GO" id="GO:0043953">
    <property type="term" value="P:protein transport by the Tat complex"/>
    <property type="evidence" value="ECO:0007669"/>
    <property type="project" value="UniProtKB-UniRule"/>
</dbReference>
<dbReference type="Gene3D" id="1.20.5.3310">
    <property type="match status" value="1"/>
</dbReference>
<dbReference type="HAMAP" id="MF_00236">
    <property type="entry name" value="TatA_E"/>
    <property type="match status" value="1"/>
</dbReference>
<dbReference type="InterPro" id="IPR003369">
    <property type="entry name" value="TatA/B/E"/>
</dbReference>
<dbReference type="InterPro" id="IPR006312">
    <property type="entry name" value="TatA/E"/>
</dbReference>
<dbReference type="NCBIfam" id="NF002813">
    <property type="entry name" value="PRK02958.1"/>
    <property type="match status" value="1"/>
</dbReference>
<dbReference type="NCBIfam" id="TIGR01411">
    <property type="entry name" value="tatAE"/>
    <property type="match status" value="1"/>
</dbReference>
<dbReference type="PANTHER" id="PTHR42982">
    <property type="entry name" value="SEC-INDEPENDENT PROTEIN TRANSLOCASE PROTEIN TATA"/>
    <property type="match status" value="1"/>
</dbReference>
<dbReference type="PANTHER" id="PTHR42982:SF1">
    <property type="entry name" value="SEC-INDEPENDENT PROTEIN TRANSLOCASE PROTEIN TATA"/>
    <property type="match status" value="1"/>
</dbReference>
<dbReference type="Pfam" id="PF02416">
    <property type="entry name" value="TatA_B_E"/>
    <property type="match status" value="1"/>
</dbReference>
<accession>B2UEE1</accession>
<gene>
    <name evidence="1" type="primary">tatA</name>
    <name type="ordered locus">Rpic_3219</name>
</gene>